<gene>
    <name type="primary">C8orf48</name>
</gene>
<name>CH048_HUMAN</name>
<accession>Q96LL4</accession>
<accession>Q96LJ9</accession>
<sequence>MAICPELAQTDKSALANLSDETETLKNSTDEVQTSSSFSSSGGRQSSPLTSGSKLEREKQTPSLEQGDTQSELLDYKNYEKKLSKKWINYLKLKDSNFERHQPDTKLPTEITRVSDEELNALQSYCTMKINLIHRRGDSKKKTSSRHKKLHLGLDVEASERDAFSCTVPDELLNRIYFKNMRTTPKQEAAAKQHISYQCPYCNRKRAELALSAFLKQKKTLLESFLLQERIDEHLHTKDFLTRIGEAHQDFPRLSDDPRIIWKRLTEKSHIRYSGFERSETEQKLQRDGNSACHLPFSLPFLKRLTLIKPELVIVNDNV</sequence>
<organism>
    <name type="scientific">Homo sapiens</name>
    <name type="common">Human</name>
    <dbReference type="NCBI Taxonomy" id="9606"/>
    <lineage>
        <taxon>Eukaryota</taxon>
        <taxon>Metazoa</taxon>
        <taxon>Chordata</taxon>
        <taxon>Craniata</taxon>
        <taxon>Vertebrata</taxon>
        <taxon>Euteleostomi</taxon>
        <taxon>Mammalia</taxon>
        <taxon>Eutheria</taxon>
        <taxon>Euarchontoglires</taxon>
        <taxon>Primates</taxon>
        <taxon>Haplorrhini</taxon>
        <taxon>Catarrhini</taxon>
        <taxon>Hominidae</taxon>
        <taxon>Homo</taxon>
    </lineage>
</organism>
<comment type="interaction">
    <interactant intactId="EBI-751596">
        <id>Q96LL4</id>
    </interactant>
    <interactant intactId="EBI-3866279">
        <id>Q9BWT7</id>
        <label>CARD10</label>
    </interactant>
    <organismsDiffer>false</organismsDiffer>
    <experiments>3</experiments>
</comment>
<comment type="interaction">
    <interactant intactId="EBI-751596">
        <id>Q96LL4</id>
    </interactant>
    <interactant intactId="EBI-25837549">
        <id>P28329-3</id>
        <label>CHAT</label>
    </interactant>
    <organismsDiffer>false</organismsDiffer>
    <experiments>3</experiments>
</comment>
<comment type="interaction">
    <interactant intactId="EBI-751596">
        <id>Q96LL4</id>
    </interactant>
    <interactant intactId="EBI-10976677">
        <id>G5E9A7</id>
        <label>DMWD</label>
    </interactant>
    <organismsDiffer>false</organismsDiffer>
    <experiments>3</experiments>
</comment>
<comment type="interaction">
    <interactant intactId="EBI-751596">
        <id>Q96LL4</id>
    </interactant>
    <interactant intactId="EBI-750300">
        <id>Q01658</id>
        <label>DR1</label>
    </interactant>
    <organismsDiffer>false</organismsDiffer>
    <experiments>3</experiments>
</comment>
<comment type="interaction">
    <interactant intactId="EBI-751596">
        <id>Q96LL4</id>
    </interactant>
    <interactant intactId="EBI-348399">
        <id>P22607</id>
        <label>FGFR3</label>
    </interactant>
    <organismsDiffer>false</organismsDiffer>
    <experiments>3</experiments>
</comment>
<comment type="interaction">
    <interactant intactId="EBI-751596">
        <id>Q96LL4</id>
    </interactant>
    <interactant intactId="EBI-8285963">
        <id>Q14957</id>
        <label>GRIN2C</label>
    </interactant>
    <organismsDiffer>false</organismsDiffer>
    <experiments>3</experiments>
</comment>
<comment type="interaction">
    <interactant intactId="EBI-751596">
        <id>Q96LL4</id>
    </interactant>
    <interactant intactId="EBI-1054873">
        <id>Q9Y5Q9</id>
        <label>GTF3C3</label>
    </interactant>
    <organismsDiffer>false</organismsDiffer>
    <experiments>3</experiments>
</comment>
<comment type="interaction">
    <interactant intactId="EBI-751596">
        <id>Q96LL4</id>
    </interactant>
    <interactant intactId="EBI-350145">
        <id>P01112</id>
        <label>HRAS</label>
    </interactant>
    <organismsDiffer>false</organismsDiffer>
    <experiments>3</experiments>
</comment>
<comment type="interaction">
    <interactant intactId="EBI-751596">
        <id>Q96LL4</id>
    </interactant>
    <interactant intactId="EBI-352682">
        <id>P04792</id>
        <label>HSPB1</label>
    </interactant>
    <organismsDiffer>false</organismsDiffer>
    <experiments>3</experiments>
</comment>
<comment type="interaction">
    <interactant intactId="EBI-751596">
        <id>Q96LL4</id>
    </interactant>
    <interactant intactId="EBI-10975473">
        <id>O60333-2</id>
        <label>KIF1B</label>
    </interactant>
    <organismsDiffer>false</organismsDiffer>
    <experiments>3</experiments>
</comment>
<comment type="interaction">
    <interactant intactId="EBI-751596">
        <id>Q96LL4</id>
    </interactant>
    <interactant intactId="EBI-10171697">
        <id>Q6A162</id>
        <label>KRT40</label>
    </interactant>
    <organismsDiffer>false</organismsDiffer>
    <experiments>3</experiments>
</comment>
<comment type="interaction">
    <interactant intactId="EBI-751596">
        <id>Q96LL4</id>
    </interactant>
    <interactant intactId="EBI-307531">
        <id>P23508</id>
        <label>MCC</label>
    </interactant>
    <organismsDiffer>false</organismsDiffer>
    <experiments>3</experiments>
</comment>
<comment type="interaction">
    <interactant intactId="EBI-751596">
        <id>Q96LL4</id>
    </interactant>
    <interactant intactId="EBI-724076">
        <id>Q99750</id>
        <label>MDFI</label>
    </interactant>
    <organismsDiffer>false</organismsDiffer>
    <experiments>6</experiments>
</comment>
<comment type="interaction">
    <interactant intactId="EBI-751596">
        <id>Q96LL4</id>
    </interactant>
    <interactant intactId="EBI-475646">
        <id>P07196</id>
        <label>NEFL</label>
    </interactant>
    <organismsDiffer>false</organismsDiffer>
    <experiments>3</experiments>
</comment>
<comment type="interaction">
    <interactant intactId="EBI-751596">
        <id>Q96LL4</id>
    </interactant>
    <interactant intactId="EBI-748974">
        <id>Q96CV9</id>
        <label>OPTN</label>
    </interactant>
    <organismsDiffer>false</organismsDiffer>
    <experiments>3</experiments>
</comment>
<comment type="interaction">
    <interactant intactId="EBI-751596">
        <id>Q96LL4</id>
    </interactant>
    <interactant intactId="EBI-749195">
        <id>P60891</id>
        <label>PRPS1</label>
    </interactant>
    <organismsDiffer>false</organismsDiffer>
    <experiments>3</experiments>
</comment>
<comment type="interaction">
    <interactant intactId="EBI-751596">
        <id>Q96LL4</id>
    </interactant>
    <interactant intactId="EBI-396669">
        <id>Q9Y3C5</id>
        <label>RNF11</label>
    </interactant>
    <organismsDiffer>false</organismsDiffer>
    <experiments>3</experiments>
</comment>
<comment type="interaction">
    <interactant intactId="EBI-751596">
        <id>Q96LL4</id>
    </interactant>
    <interactant intactId="EBI-5235340">
        <id>Q7Z699</id>
        <label>SPRED1</label>
    </interactant>
    <organismsDiffer>false</organismsDiffer>
    <experiments>3</experiments>
</comment>
<comment type="interaction">
    <interactant intactId="EBI-751596">
        <id>Q96LL4</id>
    </interactant>
    <interactant intactId="EBI-372899">
        <id>Q13148</id>
        <label>TARDBP</label>
    </interactant>
    <organismsDiffer>false</organismsDiffer>
    <experiments>6</experiments>
</comment>
<comment type="interaction">
    <interactant intactId="EBI-751596">
        <id>Q96LL4</id>
    </interactant>
    <interactant intactId="EBI-12806590">
        <id>Q86WV8</id>
        <label>TSC1</label>
    </interactant>
    <organismsDiffer>false</organismsDiffer>
    <experiments>3</experiments>
</comment>
<comment type="interaction">
    <interactant intactId="EBI-751596">
        <id>Q96LL4</id>
    </interactant>
    <interactant intactId="EBI-720609">
        <id>O76024</id>
        <label>WFS1</label>
    </interactant>
    <organismsDiffer>false</organismsDiffer>
    <experiments>3</experiments>
</comment>
<comment type="sequence caution" evidence="5">
    <conflict type="erroneous initiation">
        <sequence resource="EMBL-CDS" id="BAB71692"/>
    </conflict>
    <text>Truncated N-terminus.</text>
</comment>
<proteinExistence type="evidence at protein level"/>
<evidence type="ECO:0000256" key="1">
    <source>
        <dbReference type="SAM" id="MobiDB-lite"/>
    </source>
</evidence>
<evidence type="ECO:0000269" key="2">
    <source>
    </source>
</evidence>
<evidence type="ECO:0000269" key="3">
    <source>
    </source>
</evidence>
<evidence type="ECO:0000269" key="4">
    <source ref="1"/>
</evidence>
<evidence type="ECO:0000305" key="5"/>
<protein>
    <recommendedName>
        <fullName>Uncharacterized protein C8orf48</fullName>
    </recommendedName>
</protein>
<reference key="1">
    <citation type="submission" date="2001-06" db="EMBL/GenBank/DDBJ databases">
        <title>A novel gene located in 8p22.</title>
        <authorList>
            <person name="Xu Z."/>
            <person name="Liang L."/>
            <person name="Zhao M."/>
            <person name="Li T."/>
        </authorList>
    </citation>
    <scope>NUCLEOTIDE SEQUENCE [MRNA]</scope>
    <scope>VARIANTS PHE-28 AND MET-285</scope>
    <source>
        <tissue>Liver</tissue>
    </source>
</reference>
<reference key="2">
    <citation type="journal article" date="2004" name="Nat. Genet.">
        <title>Complete sequencing and characterization of 21,243 full-length human cDNAs.</title>
        <authorList>
            <person name="Ota T."/>
            <person name="Suzuki Y."/>
            <person name="Nishikawa T."/>
            <person name="Otsuki T."/>
            <person name="Sugiyama T."/>
            <person name="Irie R."/>
            <person name="Wakamatsu A."/>
            <person name="Hayashi K."/>
            <person name="Sato H."/>
            <person name="Nagai K."/>
            <person name="Kimura K."/>
            <person name="Makita H."/>
            <person name="Sekine M."/>
            <person name="Obayashi M."/>
            <person name="Nishi T."/>
            <person name="Shibahara T."/>
            <person name="Tanaka T."/>
            <person name="Ishii S."/>
            <person name="Yamamoto J."/>
            <person name="Saito K."/>
            <person name="Kawai Y."/>
            <person name="Isono Y."/>
            <person name="Nakamura Y."/>
            <person name="Nagahari K."/>
            <person name="Murakami K."/>
            <person name="Yasuda T."/>
            <person name="Iwayanagi T."/>
            <person name="Wagatsuma M."/>
            <person name="Shiratori A."/>
            <person name="Sudo H."/>
            <person name="Hosoiri T."/>
            <person name="Kaku Y."/>
            <person name="Kodaira H."/>
            <person name="Kondo H."/>
            <person name="Sugawara M."/>
            <person name="Takahashi M."/>
            <person name="Kanda K."/>
            <person name="Yokoi T."/>
            <person name="Furuya T."/>
            <person name="Kikkawa E."/>
            <person name="Omura Y."/>
            <person name="Abe K."/>
            <person name="Kamihara K."/>
            <person name="Katsuta N."/>
            <person name="Sato K."/>
            <person name="Tanikawa M."/>
            <person name="Yamazaki M."/>
            <person name="Ninomiya K."/>
            <person name="Ishibashi T."/>
            <person name="Yamashita H."/>
            <person name="Murakawa K."/>
            <person name="Fujimori K."/>
            <person name="Tanai H."/>
            <person name="Kimata M."/>
            <person name="Watanabe M."/>
            <person name="Hiraoka S."/>
            <person name="Chiba Y."/>
            <person name="Ishida S."/>
            <person name="Ono Y."/>
            <person name="Takiguchi S."/>
            <person name="Watanabe S."/>
            <person name="Yosida M."/>
            <person name="Hotuta T."/>
            <person name="Kusano J."/>
            <person name="Kanehori K."/>
            <person name="Takahashi-Fujii A."/>
            <person name="Hara H."/>
            <person name="Tanase T.-O."/>
            <person name="Nomura Y."/>
            <person name="Togiya S."/>
            <person name="Komai F."/>
            <person name="Hara R."/>
            <person name="Takeuchi K."/>
            <person name="Arita M."/>
            <person name="Imose N."/>
            <person name="Musashino K."/>
            <person name="Yuuki H."/>
            <person name="Oshima A."/>
            <person name="Sasaki N."/>
            <person name="Aotsuka S."/>
            <person name="Yoshikawa Y."/>
            <person name="Matsunawa H."/>
            <person name="Ichihara T."/>
            <person name="Shiohata N."/>
            <person name="Sano S."/>
            <person name="Moriya S."/>
            <person name="Momiyama H."/>
            <person name="Satoh N."/>
            <person name="Takami S."/>
            <person name="Terashima Y."/>
            <person name="Suzuki O."/>
            <person name="Nakagawa S."/>
            <person name="Senoh A."/>
            <person name="Mizoguchi H."/>
            <person name="Goto Y."/>
            <person name="Shimizu F."/>
            <person name="Wakebe H."/>
            <person name="Hishigaki H."/>
            <person name="Watanabe T."/>
            <person name="Sugiyama A."/>
            <person name="Takemoto M."/>
            <person name="Kawakami B."/>
            <person name="Yamazaki M."/>
            <person name="Watanabe K."/>
            <person name="Kumagai A."/>
            <person name="Itakura S."/>
            <person name="Fukuzumi Y."/>
            <person name="Fujimori Y."/>
            <person name="Komiyama M."/>
            <person name="Tashiro H."/>
            <person name="Tanigami A."/>
            <person name="Fujiwara T."/>
            <person name="Ono T."/>
            <person name="Yamada K."/>
            <person name="Fujii Y."/>
            <person name="Ozaki K."/>
            <person name="Hirao M."/>
            <person name="Ohmori Y."/>
            <person name="Kawabata A."/>
            <person name="Hikiji T."/>
            <person name="Kobatake N."/>
            <person name="Inagaki H."/>
            <person name="Ikema Y."/>
            <person name="Okamoto S."/>
            <person name="Okitani R."/>
            <person name="Kawakami T."/>
            <person name="Noguchi S."/>
            <person name="Itoh T."/>
            <person name="Shigeta K."/>
            <person name="Senba T."/>
            <person name="Matsumura K."/>
            <person name="Nakajima Y."/>
            <person name="Mizuno T."/>
            <person name="Morinaga M."/>
            <person name="Sasaki M."/>
            <person name="Togashi T."/>
            <person name="Oyama M."/>
            <person name="Hata H."/>
            <person name="Watanabe M."/>
            <person name="Komatsu T."/>
            <person name="Mizushima-Sugano J."/>
            <person name="Satoh T."/>
            <person name="Shirai Y."/>
            <person name="Takahashi Y."/>
            <person name="Nakagawa K."/>
            <person name="Okumura K."/>
            <person name="Nagase T."/>
            <person name="Nomura N."/>
            <person name="Kikuchi H."/>
            <person name="Masuho Y."/>
            <person name="Yamashita R."/>
            <person name="Nakai K."/>
            <person name="Yada T."/>
            <person name="Nakamura Y."/>
            <person name="Ohara O."/>
            <person name="Isogai T."/>
            <person name="Sugano S."/>
        </authorList>
    </citation>
    <scope>NUCLEOTIDE SEQUENCE [LARGE SCALE MRNA]</scope>
    <scope>VARIANTS PHE-28 AND MET-285</scope>
    <source>
        <tissue>Testis</tissue>
    </source>
</reference>
<reference key="3">
    <citation type="journal article" date="2006" name="Nature">
        <title>DNA sequence and analysis of human chromosome 8.</title>
        <authorList>
            <person name="Nusbaum C."/>
            <person name="Mikkelsen T.S."/>
            <person name="Zody M.C."/>
            <person name="Asakawa S."/>
            <person name="Taudien S."/>
            <person name="Garber M."/>
            <person name="Kodira C.D."/>
            <person name="Schueler M.G."/>
            <person name="Shimizu A."/>
            <person name="Whittaker C.A."/>
            <person name="Chang J.L."/>
            <person name="Cuomo C.A."/>
            <person name="Dewar K."/>
            <person name="FitzGerald M.G."/>
            <person name="Yang X."/>
            <person name="Allen N.R."/>
            <person name="Anderson S."/>
            <person name="Asakawa T."/>
            <person name="Blechschmidt K."/>
            <person name="Bloom T."/>
            <person name="Borowsky M.L."/>
            <person name="Butler J."/>
            <person name="Cook A."/>
            <person name="Corum B."/>
            <person name="DeArellano K."/>
            <person name="DeCaprio D."/>
            <person name="Dooley K.T."/>
            <person name="Dorris L. III"/>
            <person name="Engels R."/>
            <person name="Gloeckner G."/>
            <person name="Hafez N."/>
            <person name="Hagopian D.S."/>
            <person name="Hall J.L."/>
            <person name="Ishikawa S.K."/>
            <person name="Jaffe D.B."/>
            <person name="Kamat A."/>
            <person name="Kudoh J."/>
            <person name="Lehmann R."/>
            <person name="Lokitsang T."/>
            <person name="Macdonald P."/>
            <person name="Major J.E."/>
            <person name="Matthews C.D."/>
            <person name="Mauceli E."/>
            <person name="Menzel U."/>
            <person name="Mihalev A.H."/>
            <person name="Minoshima S."/>
            <person name="Murayama Y."/>
            <person name="Naylor J.W."/>
            <person name="Nicol R."/>
            <person name="Nguyen C."/>
            <person name="O'Leary S.B."/>
            <person name="O'Neill K."/>
            <person name="Parker S.C.J."/>
            <person name="Polley A."/>
            <person name="Raymond C.K."/>
            <person name="Reichwald K."/>
            <person name="Rodriguez J."/>
            <person name="Sasaki T."/>
            <person name="Schilhabel M."/>
            <person name="Siddiqui R."/>
            <person name="Smith C.L."/>
            <person name="Sneddon T.P."/>
            <person name="Talamas J.A."/>
            <person name="Tenzin P."/>
            <person name="Topham K."/>
            <person name="Venkataraman V."/>
            <person name="Wen G."/>
            <person name="Yamazaki S."/>
            <person name="Young S.K."/>
            <person name="Zeng Q."/>
            <person name="Zimmer A.R."/>
            <person name="Rosenthal A."/>
            <person name="Birren B.W."/>
            <person name="Platzer M."/>
            <person name="Shimizu N."/>
            <person name="Lander E.S."/>
        </authorList>
    </citation>
    <scope>NUCLEOTIDE SEQUENCE [LARGE SCALE GENOMIC DNA]</scope>
</reference>
<reference key="4">
    <citation type="journal article" date="2004" name="Genome Res.">
        <title>The status, quality, and expansion of the NIH full-length cDNA project: the Mammalian Gene Collection (MGC).</title>
        <authorList>
            <consortium name="The MGC Project Team"/>
        </authorList>
    </citation>
    <scope>NUCLEOTIDE SEQUENCE [LARGE SCALE MRNA]</scope>
    <scope>VARIANTS PHE-28 AND MET-285</scope>
    <source>
        <tissue>Testis</tissue>
    </source>
</reference>
<feature type="chain" id="PRO_0000285631" description="Uncharacterized protein C8orf48">
    <location>
        <begin position="1"/>
        <end position="319"/>
    </location>
</feature>
<feature type="region of interest" description="Disordered" evidence="1">
    <location>
        <begin position="21"/>
        <end position="70"/>
    </location>
</feature>
<feature type="compositionally biased region" description="Polar residues" evidence="1">
    <location>
        <begin position="25"/>
        <end position="34"/>
    </location>
</feature>
<feature type="compositionally biased region" description="Low complexity" evidence="1">
    <location>
        <begin position="35"/>
        <end position="51"/>
    </location>
</feature>
<feature type="compositionally biased region" description="Polar residues" evidence="1">
    <location>
        <begin position="61"/>
        <end position="70"/>
    </location>
</feature>
<feature type="sequence variant" id="VAR_063134" description="In dbSNP:rs13273355." evidence="2 3 4">
    <original>S</original>
    <variation>F</variation>
    <location>
        <position position="28"/>
    </location>
</feature>
<feature type="sequence variant" id="VAR_063135" description="In dbSNP:rs11203497." evidence="2 3 4">
    <original>L</original>
    <variation>M</variation>
    <location>
        <position position="285"/>
    </location>
</feature>
<feature type="sequence conflict" description="In Ref. 2; BAB71692." evidence="5" ref="2">
    <original>A</original>
    <variation>T</variation>
    <location>
        <position position="158"/>
    </location>
</feature>
<dbReference type="EMBL" id="AF394908">
    <property type="protein sequence ID" value="AAQ02889.1"/>
    <property type="molecule type" value="mRNA"/>
</dbReference>
<dbReference type="EMBL" id="AK058131">
    <property type="protein sequence ID" value="BAB71677.1"/>
    <property type="molecule type" value="mRNA"/>
</dbReference>
<dbReference type="EMBL" id="AK058156">
    <property type="protein sequence ID" value="BAB71692.1"/>
    <property type="status" value="ALT_INIT"/>
    <property type="molecule type" value="mRNA"/>
</dbReference>
<dbReference type="EMBL" id="AC022832">
    <property type="status" value="NOT_ANNOTATED_CDS"/>
    <property type="molecule type" value="Genomic_DNA"/>
</dbReference>
<dbReference type="EMBL" id="BC031245">
    <property type="protein sequence ID" value="AAH31245.1"/>
    <property type="molecule type" value="mRNA"/>
</dbReference>
<dbReference type="CCDS" id="CCDS47809.1"/>
<dbReference type="RefSeq" id="NP_001007091.2">
    <property type="nucleotide sequence ID" value="NM_001007090.3"/>
</dbReference>
<dbReference type="BioGRID" id="127623">
    <property type="interactions" value="6"/>
</dbReference>
<dbReference type="FunCoup" id="Q96LL4">
    <property type="interactions" value="10"/>
</dbReference>
<dbReference type="IntAct" id="Q96LL4">
    <property type="interactions" value="24"/>
</dbReference>
<dbReference type="MINT" id="Q96LL4"/>
<dbReference type="STRING" id="9606.ENSP00000297324"/>
<dbReference type="GlyGen" id="Q96LL4">
    <property type="glycosylation" value="3 sites, 1 O-linked glycan (3 sites)"/>
</dbReference>
<dbReference type="iPTMnet" id="Q96LL4"/>
<dbReference type="PhosphoSitePlus" id="Q96LL4"/>
<dbReference type="BioMuta" id="C8orf48"/>
<dbReference type="DMDM" id="296434445"/>
<dbReference type="MassIVE" id="Q96LL4"/>
<dbReference type="PaxDb" id="9606-ENSP00000297324"/>
<dbReference type="PeptideAtlas" id="Q96LL4"/>
<dbReference type="Antibodypedia" id="21009">
    <property type="antibodies" value="96 antibodies from 16 providers"/>
</dbReference>
<dbReference type="DNASU" id="157773"/>
<dbReference type="Ensembl" id="ENST00000297324.5">
    <property type="protein sequence ID" value="ENSP00000297324.4"/>
    <property type="gene ID" value="ENSG00000164743.5"/>
</dbReference>
<dbReference type="GeneID" id="157773"/>
<dbReference type="KEGG" id="hsa:157773"/>
<dbReference type="MANE-Select" id="ENST00000297324.5">
    <property type="protein sequence ID" value="ENSP00000297324.4"/>
    <property type="RefSeq nucleotide sequence ID" value="NM_001007090.3"/>
    <property type="RefSeq protein sequence ID" value="NP_001007091.2"/>
</dbReference>
<dbReference type="UCSC" id="uc003wwp.4">
    <property type="organism name" value="human"/>
</dbReference>
<dbReference type="AGR" id="HGNC:26345"/>
<dbReference type="CTD" id="157773"/>
<dbReference type="DisGeNET" id="157773"/>
<dbReference type="GeneCards" id="C8orf48"/>
<dbReference type="HGNC" id="HGNC:26345">
    <property type="gene designation" value="C8orf48"/>
</dbReference>
<dbReference type="HPA" id="ENSG00000164743">
    <property type="expression patterns" value="Tissue enhanced (testis)"/>
</dbReference>
<dbReference type="neXtProt" id="NX_Q96LL4"/>
<dbReference type="OpenTargets" id="ENSG00000164743"/>
<dbReference type="PharmGKB" id="PA142672367"/>
<dbReference type="VEuPathDB" id="HostDB:ENSG00000164743"/>
<dbReference type="eggNOG" id="ENOG502S4XK">
    <property type="taxonomic scope" value="Eukaryota"/>
</dbReference>
<dbReference type="GeneTree" id="ENSGT00390000008508"/>
<dbReference type="HOGENOM" id="CLU_073087_0_0_1"/>
<dbReference type="InParanoid" id="Q96LL4"/>
<dbReference type="OMA" id="SQCPSCN"/>
<dbReference type="OrthoDB" id="9976953at2759"/>
<dbReference type="PAN-GO" id="Q96LL4">
    <property type="GO annotations" value="0 GO annotations based on evolutionary models"/>
</dbReference>
<dbReference type="PhylomeDB" id="Q96LL4"/>
<dbReference type="TreeFam" id="TF328632"/>
<dbReference type="PathwayCommons" id="Q96LL4"/>
<dbReference type="SignaLink" id="Q96LL4"/>
<dbReference type="BioGRID-ORCS" id="157773">
    <property type="hits" value="14 hits in 1126 CRISPR screens"/>
</dbReference>
<dbReference type="GenomeRNAi" id="157773"/>
<dbReference type="Pharos" id="Q96LL4">
    <property type="development level" value="Tdark"/>
</dbReference>
<dbReference type="PRO" id="PR:Q96LL4"/>
<dbReference type="Proteomes" id="UP000005640">
    <property type="component" value="Chromosome 8"/>
</dbReference>
<dbReference type="RNAct" id="Q96LL4">
    <property type="molecule type" value="protein"/>
</dbReference>
<dbReference type="Bgee" id="ENSG00000164743">
    <property type="expression patterns" value="Expressed in male germ line stem cell (sensu Vertebrata) in testis and 101 other cell types or tissues"/>
</dbReference>
<dbReference type="InterPro" id="IPR027932">
    <property type="entry name" value="DUF4606"/>
</dbReference>
<dbReference type="PANTHER" id="PTHR35256">
    <property type="entry name" value="CHROMOSOME 8 OPEN READING FRAME 48"/>
    <property type="match status" value="1"/>
</dbReference>
<dbReference type="PANTHER" id="PTHR35256:SF1">
    <property type="entry name" value="EXPRESSED SEQUENCE AI429214"/>
    <property type="match status" value="1"/>
</dbReference>
<dbReference type="Pfam" id="PF15379">
    <property type="entry name" value="DUF4606"/>
    <property type="match status" value="1"/>
</dbReference>
<keyword id="KW-1267">Proteomics identification</keyword>
<keyword id="KW-1185">Reference proteome</keyword>